<organism>
    <name type="scientific">Capsicum annuum</name>
    <name type="common">Capsicum pepper</name>
    <dbReference type="NCBI Taxonomy" id="4072"/>
    <lineage>
        <taxon>Eukaryota</taxon>
        <taxon>Viridiplantae</taxon>
        <taxon>Streptophyta</taxon>
        <taxon>Embryophyta</taxon>
        <taxon>Tracheophyta</taxon>
        <taxon>Spermatophyta</taxon>
        <taxon>Magnoliopsida</taxon>
        <taxon>eudicotyledons</taxon>
        <taxon>Gunneridae</taxon>
        <taxon>Pentapetalae</taxon>
        <taxon>asterids</taxon>
        <taxon>lamiids</taxon>
        <taxon>Solanales</taxon>
        <taxon>Solanaceae</taxon>
        <taxon>Solanoideae</taxon>
        <taxon>Capsiceae</taxon>
        <taxon>Capsicum</taxon>
    </lineage>
</organism>
<name>GGPPS_CAPAN</name>
<gene>
    <name evidence="6" type="primary">GGPS1</name>
</gene>
<sequence length="369" mass="40173">MRSMNLVDLWAQQACLVFNQTLSYKSFNGFMKIPLKNSKINPKLNKKRPFSPLTVSAIATTKEDERIEAAQTEEPFNFKIYVTEKAISVNKALDEAIIVKEPHVIHEAMRYSLLAGGKRVRPMLCLAACELVGGNQENAMAAACAVEMIHTMSLIHDDLPCMDNDDLRRGKPTNHKIYGEDVAVLAGDSLLAFAFEHIVNSTAGVTPSRIVGAVAELAKSIGTEGLVAGQVADIKCTGNASVSLETLEFIHVHKTAALLESSVVLGAILGGGTNVEVEKLRRFARCIGLLFQVVDDILDVTKSSEELGKTAGKDLVVDKTTYPKLLGLEKAKEFAAELNREAKQQLEGFDSRKAAPLIALADYIAYRDN</sequence>
<evidence type="ECO:0000250" key="1">
    <source>
        <dbReference type="UniProtKB" id="P14324"/>
    </source>
</evidence>
<evidence type="ECO:0000250" key="2">
    <source>
        <dbReference type="UniProtKB" id="P34802"/>
    </source>
</evidence>
<evidence type="ECO:0000250" key="3">
    <source>
        <dbReference type="UniProtKB" id="Q12051"/>
    </source>
</evidence>
<evidence type="ECO:0000269" key="4">
    <source>
    </source>
</evidence>
<evidence type="ECO:0000303" key="5">
    <source>
    </source>
</evidence>
<evidence type="ECO:0000305" key="6"/>
<evidence type="ECO:0000305" key="7">
    <source>
    </source>
</evidence>
<accession>P80042</accession>
<keyword id="KW-0125">Carotenoid biosynthesis</keyword>
<keyword id="KW-0150">Chloroplast</keyword>
<keyword id="KW-0414">Isoprene biosynthesis</keyword>
<keyword id="KW-0460">Magnesium</keyword>
<keyword id="KW-0479">Metal-binding</keyword>
<keyword id="KW-0934">Plastid</keyword>
<keyword id="KW-0808">Transferase</keyword>
<keyword id="KW-0809">Transit peptide</keyword>
<protein>
    <recommendedName>
        <fullName evidence="5">Geranylgeranyl pyrophosphate synthase, chloroplastic</fullName>
        <shortName evidence="5">GGPP synthase</shortName>
        <shortName evidence="5">GGPS</shortName>
        <ecNumber evidence="4">2.5.1.-</ecNumber>
    </recommendedName>
    <alternativeName>
        <fullName evidence="5">(2E,6E)-farnesyl diphosphate synthase</fullName>
    </alternativeName>
    <alternativeName>
        <fullName evidence="5">Dimethylallyltranstransferase</fullName>
        <ecNumber evidence="4">2.5.1.1</ecNumber>
    </alternativeName>
    <alternativeName>
        <fullName evidence="5">Farnesyl diphosphate synthase</fullName>
    </alternativeName>
    <alternativeName>
        <fullName evidence="5">Farnesyltranstransferase</fullName>
        <ecNumber evidence="4">2.5.1.29</ecNumber>
    </alternativeName>
    <alternativeName>
        <fullName evidence="5">Geranyltranstransferase</fullName>
        <ecNumber evidence="4">2.5.1.10</ecNumber>
    </alternativeName>
</protein>
<proteinExistence type="evidence at protein level"/>
<dbReference type="EC" id="2.5.1.-" evidence="4"/>
<dbReference type="EC" id="2.5.1.1" evidence="4"/>
<dbReference type="EC" id="2.5.1.29" evidence="4"/>
<dbReference type="EC" id="2.5.1.10" evidence="4"/>
<dbReference type="EMBL" id="X80267">
    <property type="protein sequence ID" value="CAA56554.1"/>
    <property type="molecule type" value="Genomic_DNA"/>
</dbReference>
<dbReference type="PIR" id="S53722">
    <property type="entry name" value="S53722"/>
</dbReference>
<dbReference type="RefSeq" id="XP_016568624.1">
    <property type="nucleotide sequence ID" value="XM_016713138.1"/>
</dbReference>
<dbReference type="SMR" id="P80042"/>
<dbReference type="OrthoDB" id="6921389at2759"/>
<dbReference type="BioCyc" id="MetaCyc:MONOMER-12171"/>
<dbReference type="UniPathway" id="UPA00259">
    <property type="reaction ID" value="UER00368"/>
</dbReference>
<dbReference type="UniPathway" id="UPA00260">
    <property type="reaction ID" value="UER00369"/>
</dbReference>
<dbReference type="UniPathway" id="UPA00389">
    <property type="reaction ID" value="UER00564"/>
</dbReference>
<dbReference type="GO" id="GO:0009507">
    <property type="term" value="C:chloroplast"/>
    <property type="evidence" value="ECO:0007669"/>
    <property type="project" value="UniProtKB-SubCell"/>
</dbReference>
<dbReference type="GO" id="GO:0009536">
    <property type="term" value="C:plastid"/>
    <property type="evidence" value="ECO:0000314"/>
    <property type="project" value="UniProtKB"/>
</dbReference>
<dbReference type="GO" id="GO:0004337">
    <property type="term" value="F:(2E,6E)-farnesyl diphosphate synthase activity"/>
    <property type="evidence" value="ECO:0000314"/>
    <property type="project" value="UniProtKB"/>
</dbReference>
<dbReference type="GO" id="GO:0004161">
    <property type="term" value="F:dimethylallyltranstransferase activity"/>
    <property type="evidence" value="ECO:0000314"/>
    <property type="project" value="UniProtKB"/>
</dbReference>
<dbReference type="GO" id="GO:0004311">
    <property type="term" value="F:geranylgeranyl diphosphate synthase activity"/>
    <property type="evidence" value="ECO:0000314"/>
    <property type="project" value="UniProtKB"/>
</dbReference>
<dbReference type="GO" id="GO:0046872">
    <property type="term" value="F:metal ion binding"/>
    <property type="evidence" value="ECO:0007669"/>
    <property type="project" value="UniProtKB-KW"/>
</dbReference>
<dbReference type="GO" id="GO:0016117">
    <property type="term" value="P:carotenoid biosynthetic process"/>
    <property type="evidence" value="ECO:0007669"/>
    <property type="project" value="UniProtKB-KW"/>
</dbReference>
<dbReference type="GO" id="GO:0045337">
    <property type="term" value="P:farnesyl diphosphate biosynthetic process"/>
    <property type="evidence" value="ECO:0007669"/>
    <property type="project" value="UniProtKB-UniPathway"/>
</dbReference>
<dbReference type="GO" id="GO:0033384">
    <property type="term" value="P:geranyl diphosphate biosynthetic process"/>
    <property type="evidence" value="ECO:0007669"/>
    <property type="project" value="UniProtKB-UniPathway"/>
</dbReference>
<dbReference type="GO" id="GO:0033386">
    <property type="term" value="P:geranylgeranyl diphosphate biosynthetic process"/>
    <property type="evidence" value="ECO:0007669"/>
    <property type="project" value="UniProtKB-UniPathway"/>
</dbReference>
<dbReference type="GO" id="GO:0006720">
    <property type="term" value="P:isoprenoid metabolic process"/>
    <property type="evidence" value="ECO:0000314"/>
    <property type="project" value="UniProtKB"/>
</dbReference>
<dbReference type="CDD" id="cd00685">
    <property type="entry name" value="Trans_IPPS_HT"/>
    <property type="match status" value="1"/>
</dbReference>
<dbReference type="FunFam" id="1.10.600.10:FF:000001">
    <property type="entry name" value="Geranylgeranyl diphosphate synthase"/>
    <property type="match status" value="1"/>
</dbReference>
<dbReference type="Gene3D" id="1.10.600.10">
    <property type="entry name" value="Farnesyl Diphosphate Synthase"/>
    <property type="match status" value="1"/>
</dbReference>
<dbReference type="InterPro" id="IPR008949">
    <property type="entry name" value="Isoprenoid_synthase_dom_sf"/>
</dbReference>
<dbReference type="InterPro" id="IPR000092">
    <property type="entry name" value="Polyprenyl_synt"/>
</dbReference>
<dbReference type="InterPro" id="IPR033749">
    <property type="entry name" value="Polyprenyl_synt_CS"/>
</dbReference>
<dbReference type="InterPro" id="IPR053378">
    <property type="entry name" value="Prenyl_diphosphate_synthase"/>
</dbReference>
<dbReference type="NCBIfam" id="NF045485">
    <property type="entry name" value="FPPsyn"/>
    <property type="match status" value="1"/>
</dbReference>
<dbReference type="PANTHER" id="PTHR43281">
    <property type="entry name" value="FARNESYL DIPHOSPHATE SYNTHASE"/>
    <property type="match status" value="1"/>
</dbReference>
<dbReference type="PANTHER" id="PTHR43281:SF28">
    <property type="entry name" value="GERANYLGERANYL PYROPHOSPHATE SYNTHASE, CHLOROPLASTIC-LIKE"/>
    <property type="match status" value="1"/>
</dbReference>
<dbReference type="Pfam" id="PF00348">
    <property type="entry name" value="polyprenyl_synt"/>
    <property type="match status" value="1"/>
</dbReference>
<dbReference type="SFLD" id="SFLDS00005">
    <property type="entry name" value="Isoprenoid_Synthase_Type_I"/>
    <property type="match status" value="1"/>
</dbReference>
<dbReference type="SFLD" id="SFLDG01017">
    <property type="entry name" value="Polyprenyl_Transferase_Like"/>
    <property type="match status" value="1"/>
</dbReference>
<dbReference type="SUPFAM" id="SSF48576">
    <property type="entry name" value="Terpenoid synthases"/>
    <property type="match status" value="1"/>
</dbReference>
<dbReference type="PROSITE" id="PS00723">
    <property type="entry name" value="POLYPRENYL_SYNTHASE_1"/>
    <property type="match status" value="1"/>
</dbReference>
<dbReference type="PROSITE" id="PS00444">
    <property type="entry name" value="POLYPRENYL_SYNTHASE_2"/>
    <property type="match status" value="1"/>
</dbReference>
<comment type="function">
    <text evidence="4">Catalyzes the trans-addition of the three molecules of IPP onto DMAPP to form geranylgeranyl pyrophosphate.</text>
</comment>
<comment type="catalytic activity">
    <reaction evidence="4">
        <text>isopentenyl diphosphate + dimethylallyl diphosphate = (2E)-geranyl diphosphate + diphosphate</text>
        <dbReference type="Rhea" id="RHEA:22408"/>
        <dbReference type="ChEBI" id="CHEBI:33019"/>
        <dbReference type="ChEBI" id="CHEBI:57623"/>
        <dbReference type="ChEBI" id="CHEBI:58057"/>
        <dbReference type="ChEBI" id="CHEBI:128769"/>
        <dbReference type="EC" id="2.5.1.1"/>
    </reaction>
</comment>
<comment type="catalytic activity">
    <reaction evidence="4">
        <text>isopentenyl diphosphate + (2E)-geranyl diphosphate = (2E,6E)-farnesyl diphosphate + diphosphate</text>
        <dbReference type="Rhea" id="RHEA:19361"/>
        <dbReference type="ChEBI" id="CHEBI:33019"/>
        <dbReference type="ChEBI" id="CHEBI:58057"/>
        <dbReference type="ChEBI" id="CHEBI:128769"/>
        <dbReference type="ChEBI" id="CHEBI:175763"/>
        <dbReference type="EC" id="2.5.1.10"/>
    </reaction>
</comment>
<comment type="catalytic activity">
    <reaction evidence="4">
        <text>isopentenyl diphosphate + (2E,6E)-farnesyl diphosphate = (2E,6E,10E)-geranylgeranyl diphosphate + diphosphate</text>
        <dbReference type="Rhea" id="RHEA:17653"/>
        <dbReference type="ChEBI" id="CHEBI:33019"/>
        <dbReference type="ChEBI" id="CHEBI:58756"/>
        <dbReference type="ChEBI" id="CHEBI:128769"/>
        <dbReference type="ChEBI" id="CHEBI:175763"/>
        <dbReference type="EC" id="2.5.1.29"/>
    </reaction>
</comment>
<comment type="cofactor">
    <cofactor evidence="1">
        <name>Mg(2+)</name>
        <dbReference type="ChEBI" id="CHEBI:18420"/>
    </cofactor>
    <text evidence="1">Binds 2 Mg(2+) ions per subunit.</text>
</comment>
<comment type="pathway">
    <text evidence="4">Isoprenoid biosynthesis; farnesyl diphosphate biosynthesis; farnesyl diphosphate from geranyl diphosphate and isopentenyl diphosphate: step 1/1.</text>
</comment>
<comment type="pathway">
    <text evidence="4">Isoprenoid biosynthesis; geranyl diphosphate biosynthesis; geranyl diphosphate from dimethylallyl diphosphate and isopentenyl diphosphate: step 1/1.</text>
</comment>
<comment type="pathway">
    <text evidence="4">Isoprenoid biosynthesis; geranylgeranyl diphosphate biosynthesis; geranylgeranyl diphosphate from farnesyl diphosphate and isopentenyl diphosphate: step 1/1.</text>
</comment>
<comment type="subunit">
    <text evidence="2">Monomer.</text>
</comment>
<comment type="subcellular location">
    <subcellularLocation>
        <location evidence="7">Plastid</location>
        <location evidence="7">Chloroplast</location>
    </subcellularLocation>
</comment>
<comment type="similarity">
    <text evidence="6">Belongs to the FPP/GGPP synthase family.</text>
</comment>
<reference key="1">
    <citation type="journal article" date="1992" name="Plant J.">
        <title>Identification of a cDNA for the plastid-located geranylgeranyl pyrophosphate synthase from Capsicum annuum: correlative increase in enzyme activity and transcript level during fruit ripening.</title>
        <authorList>
            <person name="Kuntz M."/>
            <person name="Roemer S."/>
            <person name="Suire C."/>
            <person name="Hugueney P."/>
            <person name="Weil J.H."/>
            <person name="Schantz R."/>
            <person name="Camara B."/>
        </authorList>
    </citation>
    <scope>NUCLEOTIDE SEQUENCE [GENOMIC DNA]</scope>
    <scope>FUNCTION</scope>
    <scope>CATALYTIC ACTIVITY</scope>
    <scope>PATHWAY</scope>
    <source>
        <strain>cv. Lamuyo</strain>
        <strain>cv. Yolo Wonder</strain>
        <tissue>Fruit</tissue>
    </source>
</reference>
<reference key="2">
    <citation type="journal article" date="1995" name="Plant Mol. Biol.">
        <title>Structure of a functional geranylgeranyl pyrophosphate synthase gene from Capsicum annuum.</title>
        <authorList>
            <person name="Badillo A."/>
            <person name="Steppuhn J."/>
            <person name="Deruere J."/>
            <person name="Camara B."/>
            <person name="Kuntz M."/>
        </authorList>
    </citation>
    <scope>NUCLEOTIDE SEQUENCE [GENOMIC DNA]</scope>
    <source>
        <strain>cv. Yolo Wonder</strain>
    </source>
</reference>
<feature type="transit peptide" description="Chloroplast" evidence="7">
    <location>
        <begin position="1"/>
        <end status="unknown"/>
    </location>
</feature>
<feature type="chain" id="PRO_0000016472" description="Geranylgeranyl pyrophosphate synthase, chloroplastic">
    <location>
        <begin status="unknown"/>
        <end position="369"/>
    </location>
</feature>
<feature type="binding site" evidence="1">
    <location>
        <position position="118"/>
    </location>
    <ligand>
        <name>isopentenyl diphosphate</name>
        <dbReference type="ChEBI" id="CHEBI:128769"/>
    </ligand>
</feature>
<feature type="binding site" evidence="1">
    <location>
        <position position="121"/>
    </location>
    <ligand>
        <name>isopentenyl diphosphate</name>
        <dbReference type="ChEBI" id="CHEBI:128769"/>
    </ligand>
</feature>
<feature type="binding site" evidence="3">
    <location>
        <position position="150"/>
    </location>
    <ligand>
        <name>isopentenyl diphosphate</name>
        <dbReference type="ChEBI" id="CHEBI:128769"/>
    </ligand>
</feature>
<feature type="binding site" evidence="1">
    <location>
        <position position="157"/>
    </location>
    <ligand>
        <name>Mg(2+)</name>
        <dbReference type="ChEBI" id="CHEBI:18420"/>
        <label>1</label>
    </ligand>
</feature>
<feature type="binding site" evidence="1">
    <location>
        <position position="157"/>
    </location>
    <ligand>
        <name>Mg(2+)</name>
        <dbReference type="ChEBI" id="CHEBI:18420"/>
        <label>2</label>
    </ligand>
</feature>
<feature type="binding site" evidence="1">
    <location>
        <position position="163"/>
    </location>
    <ligand>
        <name>Mg(2+)</name>
        <dbReference type="ChEBI" id="CHEBI:18420"/>
        <label>1</label>
    </ligand>
</feature>
<feature type="binding site" evidence="1">
    <location>
        <position position="163"/>
    </location>
    <ligand>
        <name>Mg(2+)</name>
        <dbReference type="ChEBI" id="CHEBI:18420"/>
        <label>2</label>
    </ligand>
</feature>
<feature type="binding site" evidence="3">
    <location>
        <position position="168"/>
    </location>
    <ligand>
        <name>dimethylallyl diphosphate</name>
        <dbReference type="ChEBI" id="CHEBI:57623"/>
    </ligand>
</feature>
<feature type="binding site" evidence="1">
    <location>
        <position position="169"/>
    </location>
    <ligand>
        <name>isopentenyl diphosphate</name>
        <dbReference type="ChEBI" id="CHEBI:128769"/>
    </ligand>
</feature>
<feature type="binding site" evidence="3">
    <location>
        <position position="254"/>
    </location>
    <ligand>
        <name>dimethylallyl diphosphate</name>
        <dbReference type="ChEBI" id="CHEBI:57623"/>
    </ligand>
</feature>
<feature type="binding site" evidence="3">
    <location>
        <position position="255"/>
    </location>
    <ligand>
        <name>dimethylallyl diphosphate</name>
        <dbReference type="ChEBI" id="CHEBI:57623"/>
    </ligand>
</feature>
<feature type="binding site" evidence="3">
    <location>
        <position position="292"/>
    </location>
    <ligand>
        <name>dimethylallyl diphosphate</name>
        <dbReference type="ChEBI" id="CHEBI:57623"/>
    </ligand>
</feature>
<feature type="binding site" evidence="3">
    <location>
        <position position="309"/>
    </location>
    <ligand>
        <name>dimethylallyl diphosphate</name>
        <dbReference type="ChEBI" id="CHEBI:57623"/>
    </ligand>
</feature>
<feature type="binding site" evidence="3">
    <location>
        <position position="319"/>
    </location>
    <ligand>
        <name>dimethylallyl diphosphate</name>
        <dbReference type="ChEBI" id="CHEBI:57623"/>
    </ligand>
</feature>